<gene>
    <name evidence="1" type="primary">pstB1</name>
    <name type="ordered locus">Ava_0048</name>
</gene>
<organism>
    <name type="scientific">Trichormus variabilis (strain ATCC 29413 / PCC 7937)</name>
    <name type="common">Anabaena variabilis</name>
    <dbReference type="NCBI Taxonomy" id="240292"/>
    <lineage>
        <taxon>Bacteria</taxon>
        <taxon>Bacillati</taxon>
        <taxon>Cyanobacteriota</taxon>
        <taxon>Cyanophyceae</taxon>
        <taxon>Nostocales</taxon>
        <taxon>Nostocaceae</taxon>
        <taxon>Trichormus</taxon>
    </lineage>
</organism>
<keyword id="KW-0067">ATP-binding</keyword>
<keyword id="KW-0997">Cell inner membrane</keyword>
<keyword id="KW-1003">Cell membrane</keyword>
<keyword id="KW-0472">Membrane</keyword>
<keyword id="KW-0547">Nucleotide-binding</keyword>
<keyword id="KW-0592">Phosphate transport</keyword>
<keyword id="KW-1278">Translocase</keyword>
<keyword id="KW-0813">Transport</keyword>
<accession>Q3MH62</accession>
<sequence>MSYNSRNQRDSATINHKNQAVFNVEGVKVYYGGFLALIDVHLQIPDKEIIAFIGPSGCGKSTLLRCFNRMNDLIPGAKVEGRLHYRDRNIYDSRINSVKLRRQVGMVFQRPNPFPKSIYENIAFSPRANGYKGNLDELVEDSLRRAAIWNEVKDKLKAKGTALSGGQQQRLCIARAIAMKPDVLLMDEPCSALDPISTRQVEELCLELKEQYTIIMVTHNMQQASRVADWTAFFNTEIDEYGKRRGKLVEFSPTEQMFNSPNTKEAQEYISGRFG</sequence>
<feature type="chain" id="PRO_0000272416" description="Phosphate import ATP-binding protein PstB 1">
    <location>
        <begin position="1"/>
        <end position="275"/>
    </location>
</feature>
<feature type="domain" description="ABC transporter" evidence="1">
    <location>
        <begin position="22"/>
        <end position="261"/>
    </location>
</feature>
<feature type="binding site" evidence="1">
    <location>
        <begin position="54"/>
        <end position="61"/>
    </location>
    <ligand>
        <name>ATP</name>
        <dbReference type="ChEBI" id="CHEBI:30616"/>
    </ligand>
</feature>
<proteinExistence type="inferred from homology"/>
<name>PSTB1_TRIV2</name>
<comment type="function">
    <text evidence="1">Part of the ABC transporter complex PstSACB involved in phosphate import. Responsible for energy coupling to the transport system.</text>
</comment>
<comment type="catalytic activity">
    <reaction evidence="1">
        <text>phosphate(out) + ATP + H2O = ADP + 2 phosphate(in) + H(+)</text>
        <dbReference type="Rhea" id="RHEA:24440"/>
        <dbReference type="ChEBI" id="CHEBI:15377"/>
        <dbReference type="ChEBI" id="CHEBI:15378"/>
        <dbReference type="ChEBI" id="CHEBI:30616"/>
        <dbReference type="ChEBI" id="CHEBI:43474"/>
        <dbReference type="ChEBI" id="CHEBI:456216"/>
        <dbReference type="EC" id="7.3.2.1"/>
    </reaction>
</comment>
<comment type="subunit">
    <text evidence="1">The complex is composed of two ATP-binding proteins (PstB), two transmembrane proteins (PstC and PstA) and a solute-binding protein (PstS).</text>
</comment>
<comment type="subcellular location">
    <subcellularLocation>
        <location evidence="1">Cell inner membrane</location>
        <topology evidence="1">Peripheral membrane protein</topology>
    </subcellularLocation>
</comment>
<comment type="similarity">
    <text evidence="1">Belongs to the ABC transporter superfamily. Phosphate importer (TC 3.A.1.7) family.</text>
</comment>
<evidence type="ECO:0000255" key="1">
    <source>
        <dbReference type="HAMAP-Rule" id="MF_01702"/>
    </source>
</evidence>
<dbReference type="EC" id="7.3.2.1" evidence="1"/>
<dbReference type="EMBL" id="CP000117">
    <property type="protein sequence ID" value="ABA19674.1"/>
    <property type="molecule type" value="Genomic_DNA"/>
</dbReference>
<dbReference type="SMR" id="Q3MH62"/>
<dbReference type="STRING" id="240292.Ava_0048"/>
<dbReference type="KEGG" id="ava:Ava_0048"/>
<dbReference type="eggNOG" id="COG1117">
    <property type="taxonomic scope" value="Bacteria"/>
</dbReference>
<dbReference type="HOGENOM" id="CLU_000604_1_22_3"/>
<dbReference type="Proteomes" id="UP000002533">
    <property type="component" value="Chromosome"/>
</dbReference>
<dbReference type="GO" id="GO:0005886">
    <property type="term" value="C:plasma membrane"/>
    <property type="evidence" value="ECO:0007669"/>
    <property type="project" value="UniProtKB-SubCell"/>
</dbReference>
<dbReference type="GO" id="GO:0005524">
    <property type="term" value="F:ATP binding"/>
    <property type="evidence" value="ECO:0007669"/>
    <property type="project" value="UniProtKB-KW"/>
</dbReference>
<dbReference type="GO" id="GO:0016887">
    <property type="term" value="F:ATP hydrolysis activity"/>
    <property type="evidence" value="ECO:0007669"/>
    <property type="project" value="InterPro"/>
</dbReference>
<dbReference type="GO" id="GO:0015415">
    <property type="term" value="F:ATPase-coupled phosphate ion transmembrane transporter activity"/>
    <property type="evidence" value="ECO:0007669"/>
    <property type="project" value="UniProtKB-EC"/>
</dbReference>
<dbReference type="GO" id="GO:0035435">
    <property type="term" value="P:phosphate ion transmembrane transport"/>
    <property type="evidence" value="ECO:0007669"/>
    <property type="project" value="InterPro"/>
</dbReference>
<dbReference type="CDD" id="cd03260">
    <property type="entry name" value="ABC_PstB_phosphate_transporter"/>
    <property type="match status" value="1"/>
</dbReference>
<dbReference type="Gene3D" id="3.40.50.300">
    <property type="entry name" value="P-loop containing nucleotide triphosphate hydrolases"/>
    <property type="match status" value="1"/>
</dbReference>
<dbReference type="InterPro" id="IPR003593">
    <property type="entry name" value="AAA+_ATPase"/>
</dbReference>
<dbReference type="InterPro" id="IPR003439">
    <property type="entry name" value="ABC_transporter-like_ATP-bd"/>
</dbReference>
<dbReference type="InterPro" id="IPR017871">
    <property type="entry name" value="ABC_transporter-like_CS"/>
</dbReference>
<dbReference type="InterPro" id="IPR027417">
    <property type="entry name" value="P-loop_NTPase"/>
</dbReference>
<dbReference type="InterPro" id="IPR005670">
    <property type="entry name" value="PstB-like"/>
</dbReference>
<dbReference type="NCBIfam" id="TIGR00972">
    <property type="entry name" value="3a0107s01c2"/>
    <property type="match status" value="1"/>
</dbReference>
<dbReference type="PANTHER" id="PTHR43423">
    <property type="entry name" value="ABC TRANSPORTER I FAMILY MEMBER 17"/>
    <property type="match status" value="1"/>
</dbReference>
<dbReference type="PANTHER" id="PTHR43423:SF1">
    <property type="entry name" value="ABC TRANSPORTER I FAMILY MEMBER 17"/>
    <property type="match status" value="1"/>
</dbReference>
<dbReference type="Pfam" id="PF00005">
    <property type="entry name" value="ABC_tran"/>
    <property type="match status" value="1"/>
</dbReference>
<dbReference type="SMART" id="SM00382">
    <property type="entry name" value="AAA"/>
    <property type="match status" value="1"/>
</dbReference>
<dbReference type="SUPFAM" id="SSF52540">
    <property type="entry name" value="P-loop containing nucleoside triphosphate hydrolases"/>
    <property type="match status" value="1"/>
</dbReference>
<dbReference type="PROSITE" id="PS00211">
    <property type="entry name" value="ABC_TRANSPORTER_1"/>
    <property type="match status" value="1"/>
</dbReference>
<dbReference type="PROSITE" id="PS50893">
    <property type="entry name" value="ABC_TRANSPORTER_2"/>
    <property type="match status" value="1"/>
</dbReference>
<dbReference type="PROSITE" id="PS51238">
    <property type="entry name" value="PSTB"/>
    <property type="match status" value="1"/>
</dbReference>
<reference key="1">
    <citation type="journal article" date="2014" name="Stand. Genomic Sci.">
        <title>Complete genome sequence of Anabaena variabilis ATCC 29413.</title>
        <authorList>
            <person name="Thiel T."/>
            <person name="Pratte B.S."/>
            <person name="Zhong J."/>
            <person name="Goodwin L."/>
            <person name="Copeland A."/>
            <person name="Lucas S."/>
            <person name="Han C."/>
            <person name="Pitluck S."/>
            <person name="Land M.L."/>
            <person name="Kyrpides N.C."/>
            <person name="Woyke T."/>
        </authorList>
    </citation>
    <scope>NUCLEOTIDE SEQUENCE [LARGE SCALE GENOMIC DNA]</scope>
    <source>
        <strain>ATCC 29413 / PCC 7937</strain>
    </source>
</reference>
<protein>
    <recommendedName>
        <fullName evidence="1">Phosphate import ATP-binding protein PstB 1</fullName>
        <ecNumber evidence="1">7.3.2.1</ecNumber>
    </recommendedName>
    <alternativeName>
        <fullName evidence="1">ABC phosphate transporter 1</fullName>
    </alternativeName>
    <alternativeName>
        <fullName evidence="1">Phosphate-transporting ATPase 1</fullName>
    </alternativeName>
</protein>